<keyword id="KW-0342">GTP-binding</keyword>
<keyword id="KW-0547">Nucleotide-binding</keyword>
<keyword id="KW-1185">Reference proteome</keyword>
<keyword id="KW-0677">Repeat</keyword>
<keyword id="KW-0690">Ribosome biogenesis</keyword>
<evidence type="ECO:0000255" key="1">
    <source>
        <dbReference type="HAMAP-Rule" id="MF_00195"/>
    </source>
</evidence>
<feature type="chain" id="PRO_1000011772" description="GTPase Der">
    <location>
        <begin position="1"/>
        <end position="455"/>
    </location>
</feature>
<feature type="domain" description="EngA-type G 1">
    <location>
        <begin position="4"/>
        <end position="169"/>
    </location>
</feature>
<feature type="domain" description="EngA-type G 2">
    <location>
        <begin position="178"/>
        <end position="353"/>
    </location>
</feature>
<feature type="domain" description="KH-like" evidence="1">
    <location>
        <begin position="354"/>
        <end position="439"/>
    </location>
</feature>
<feature type="binding site" evidence="1">
    <location>
        <begin position="10"/>
        <end position="17"/>
    </location>
    <ligand>
        <name>GTP</name>
        <dbReference type="ChEBI" id="CHEBI:37565"/>
        <label>1</label>
    </ligand>
</feature>
<feature type="binding site" evidence="1">
    <location>
        <begin position="57"/>
        <end position="61"/>
    </location>
    <ligand>
        <name>GTP</name>
        <dbReference type="ChEBI" id="CHEBI:37565"/>
        <label>1</label>
    </ligand>
</feature>
<feature type="binding site" evidence="1">
    <location>
        <begin position="120"/>
        <end position="123"/>
    </location>
    <ligand>
        <name>GTP</name>
        <dbReference type="ChEBI" id="CHEBI:37565"/>
        <label>1</label>
    </ligand>
</feature>
<feature type="binding site" evidence="1">
    <location>
        <begin position="184"/>
        <end position="191"/>
    </location>
    <ligand>
        <name>GTP</name>
        <dbReference type="ChEBI" id="CHEBI:37565"/>
        <label>2</label>
    </ligand>
</feature>
<feature type="binding site" evidence="1">
    <location>
        <begin position="231"/>
        <end position="235"/>
    </location>
    <ligand>
        <name>GTP</name>
        <dbReference type="ChEBI" id="CHEBI:37565"/>
        <label>2</label>
    </ligand>
</feature>
<feature type="binding site" evidence="1">
    <location>
        <begin position="296"/>
        <end position="299"/>
    </location>
    <ligand>
        <name>GTP</name>
        <dbReference type="ChEBI" id="CHEBI:37565"/>
        <label>2</label>
    </ligand>
</feature>
<protein>
    <recommendedName>
        <fullName evidence="1">GTPase Der</fullName>
    </recommendedName>
    <alternativeName>
        <fullName evidence="1">GTP-binding protein EngA</fullName>
    </alternativeName>
</protein>
<proteinExistence type="inferred from homology"/>
<reference key="1">
    <citation type="submission" date="2005-08" db="EMBL/GenBank/DDBJ databases">
        <title>Complete sequence of Synechococcus sp. CC9902.</title>
        <authorList>
            <person name="Copeland A."/>
            <person name="Lucas S."/>
            <person name="Lapidus A."/>
            <person name="Barry K."/>
            <person name="Detter J.C."/>
            <person name="Glavina T."/>
            <person name="Hammon N."/>
            <person name="Israni S."/>
            <person name="Pitluck S."/>
            <person name="Martinez M."/>
            <person name="Schmutz J."/>
            <person name="Larimer F."/>
            <person name="Land M."/>
            <person name="Kyrpides N."/>
            <person name="Ivanova N."/>
            <person name="Richardson P."/>
        </authorList>
    </citation>
    <scope>NUCLEOTIDE SEQUENCE [LARGE SCALE GENOMIC DNA]</scope>
    <source>
        <strain>CC9902</strain>
    </source>
</reference>
<dbReference type="EMBL" id="CP000097">
    <property type="protein sequence ID" value="ABB25612.1"/>
    <property type="molecule type" value="Genomic_DNA"/>
</dbReference>
<dbReference type="RefSeq" id="WP_011359456.1">
    <property type="nucleotide sequence ID" value="NC_007513.1"/>
</dbReference>
<dbReference type="SMR" id="Q3AZ65"/>
<dbReference type="STRING" id="316279.Syncc9902_0644"/>
<dbReference type="KEGG" id="sye:Syncc9902_0644"/>
<dbReference type="eggNOG" id="COG1160">
    <property type="taxonomic scope" value="Bacteria"/>
</dbReference>
<dbReference type="HOGENOM" id="CLU_016077_6_2_3"/>
<dbReference type="OrthoDB" id="9805918at2"/>
<dbReference type="Proteomes" id="UP000002712">
    <property type="component" value="Chromosome"/>
</dbReference>
<dbReference type="GO" id="GO:0016887">
    <property type="term" value="F:ATP hydrolysis activity"/>
    <property type="evidence" value="ECO:0007669"/>
    <property type="project" value="InterPro"/>
</dbReference>
<dbReference type="GO" id="GO:0005525">
    <property type="term" value="F:GTP binding"/>
    <property type="evidence" value="ECO:0007669"/>
    <property type="project" value="UniProtKB-UniRule"/>
</dbReference>
<dbReference type="GO" id="GO:0043022">
    <property type="term" value="F:ribosome binding"/>
    <property type="evidence" value="ECO:0007669"/>
    <property type="project" value="TreeGrafter"/>
</dbReference>
<dbReference type="GO" id="GO:0042254">
    <property type="term" value="P:ribosome biogenesis"/>
    <property type="evidence" value="ECO:0007669"/>
    <property type="project" value="UniProtKB-KW"/>
</dbReference>
<dbReference type="CDD" id="cd01894">
    <property type="entry name" value="EngA1"/>
    <property type="match status" value="1"/>
</dbReference>
<dbReference type="CDD" id="cd01895">
    <property type="entry name" value="EngA2"/>
    <property type="match status" value="1"/>
</dbReference>
<dbReference type="FunFam" id="3.30.300.20:FF:000004">
    <property type="entry name" value="GTPase Der"/>
    <property type="match status" value="1"/>
</dbReference>
<dbReference type="FunFam" id="3.40.50.300:FF:000040">
    <property type="entry name" value="GTPase Der"/>
    <property type="match status" value="1"/>
</dbReference>
<dbReference type="FunFam" id="3.40.50.300:FF:000057">
    <property type="entry name" value="GTPase Der"/>
    <property type="match status" value="1"/>
</dbReference>
<dbReference type="Gene3D" id="3.30.300.20">
    <property type="match status" value="1"/>
</dbReference>
<dbReference type="Gene3D" id="3.40.50.300">
    <property type="entry name" value="P-loop containing nucleotide triphosphate hydrolases"/>
    <property type="match status" value="2"/>
</dbReference>
<dbReference type="HAMAP" id="MF_00195">
    <property type="entry name" value="GTPase_Der"/>
    <property type="match status" value="1"/>
</dbReference>
<dbReference type="InterPro" id="IPR003593">
    <property type="entry name" value="AAA+_ATPase"/>
</dbReference>
<dbReference type="InterPro" id="IPR031166">
    <property type="entry name" value="G_ENGA"/>
</dbReference>
<dbReference type="InterPro" id="IPR006073">
    <property type="entry name" value="GTP-bd"/>
</dbReference>
<dbReference type="InterPro" id="IPR016484">
    <property type="entry name" value="GTPase_Der"/>
</dbReference>
<dbReference type="InterPro" id="IPR032859">
    <property type="entry name" value="KH_dom-like"/>
</dbReference>
<dbReference type="InterPro" id="IPR015946">
    <property type="entry name" value="KH_dom-like_a/b"/>
</dbReference>
<dbReference type="InterPro" id="IPR027417">
    <property type="entry name" value="P-loop_NTPase"/>
</dbReference>
<dbReference type="InterPro" id="IPR005225">
    <property type="entry name" value="Small_GTP-bd"/>
</dbReference>
<dbReference type="NCBIfam" id="TIGR03594">
    <property type="entry name" value="GTPase_EngA"/>
    <property type="match status" value="1"/>
</dbReference>
<dbReference type="NCBIfam" id="TIGR00231">
    <property type="entry name" value="small_GTP"/>
    <property type="match status" value="2"/>
</dbReference>
<dbReference type="PANTHER" id="PTHR43834">
    <property type="entry name" value="GTPASE DER"/>
    <property type="match status" value="1"/>
</dbReference>
<dbReference type="PANTHER" id="PTHR43834:SF6">
    <property type="entry name" value="GTPASE DER"/>
    <property type="match status" value="1"/>
</dbReference>
<dbReference type="Pfam" id="PF14714">
    <property type="entry name" value="KH_dom-like"/>
    <property type="match status" value="1"/>
</dbReference>
<dbReference type="Pfam" id="PF01926">
    <property type="entry name" value="MMR_HSR1"/>
    <property type="match status" value="2"/>
</dbReference>
<dbReference type="PIRSF" id="PIRSF006485">
    <property type="entry name" value="GTP-binding_EngA"/>
    <property type="match status" value="1"/>
</dbReference>
<dbReference type="PRINTS" id="PR00326">
    <property type="entry name" value="GTP1OBG"/>
</dbReference>
<dbReference type="SMART" id="SM00382">
    <property type="entry name" value="AAA"/>
    <property type="match status" value="2"/>
</dbReference>
<dbReference type="SUPFAM" id="SSF52540">
    <property type="entry name" value="P-loop containing nucleoside triphosphate hydrolases"/>
    <property type="match status" value="2"/>
</dbReference>
<dbReference type="PROSITE" id="PS51712">
    <property type="entry name" value="G_ENGA"/>
    <property type="match status" value="2"/>
</dbReference>
<comment type="function">
    <text evidence="1">GTPase that plays an essential role in the late steps of ribosome biogenesis.</text>
</comment>
<comment type="subunit">
    <text evidence="1">Associates with the 50S ribosomal subunit.</text>
</comment>
<comment type="similarity">
    <text evidence="1">Belongs to the TRAFAC class TrmE-Era-EngA-EngB-Septin-like GTPase superfamily. EngA (Der) GTPase family.</text>
</comment>
<sequence length="455" mass="50902">MARPVVAIIGRPNVGKSTLVNRLCRSREAIVHDQPGVTRDRTYQDGYWGDREFKVVDTGGLVFDDDSEFLPEIREQAALALDEASVALVIVDGKQGLTAADESIAEFLRQQRCPTLLAVNKCESVEQGLAMAAEFWSLGLGEPYPISAIHGAGTAEVLDQVLTFLPPKDQEGDEEEPIQMSIIGRPNVGKSSLLNAICGEQRAIVSPIRGTTRDTIDTNIVRENRPWRLVDTAGIRRRRSVNYGPEYFGINRSFKAIERSDVCVLVIDALDGVTEQDQRLAGRIEEDGRACVVVVNKWDAVEKDSHTMSATEKELRAKLYFLDWAPMLFTSALTGQRVESIFALAALAVEQHRRRVTTSVVNEVLKEALSWRSPPTTRGGRQGKLYYGTQVASRPPSFTLFVNDPKLFGDTYRRYVERHIREGLGFDGTPLKLFWRGKQQRDAEKELARQQNRRG</sequence>
<accession>Q3AZ65</accession>
<organism>
    <name type="scientific">Synechococcus sp. (strain CC9902)</name>
    <dbReference type="NCBI Taxonomy" id="316279"/>
    <lineage>
        <taxon>Bacteria</taxon>
        <taxon>Bacillati</taxon>
        <taxon>Cyanobacteriota</taxon>
        <taxon>Cyanophyceae</taxon>
        <taxon>Synechococcales</taxon>
        <taxon>Synechococcaceae</taxon>
        <taxon>Synechococcus</taxon>
    </lineage>
</organism>
<name>DER_SYNS9</name>
<gene>
    <name evidence="1" type="primary">der</name>
    <name type="synonym">engA</name>
    <name type="ordered locus">Syncc9902_0644</name>
</gene>